<dbReference type="EC" id="2.3.2.27" evidence="3"/>
<dbReference type="EMBL" id="AC005770">
    <property type="protein sequence ID" value="AAC79605.1"/>
    <property type="status" value="ALT_SEQ"/>
    <property type="molecule type" value="Genomic_DNA"/>
</dbReference>
<dbReference type="EMBL" id="CP002685">
    <property type="protein sequence ID" value="AEC09612.1"/>
    <property type="molecule type" value="Genomic_DNA"/>
</dbReference>
<dbReference type="EMBL" id="CP002685">
    <property type="protein sequence ID" value="ANM62802.1"/>
    <property type="molecule type" value="Genomic_DNA"/>
</dbReference>
<dbReference type="EMBL" id="CP002685">
    <property type="protein sequence ID" value="ANM62803.1"/>
    <property type="molecule type" value="Genomic_DNA"/>
</dbReference>
<dbReference type="EMBL" id="AK119158">
    <property type="protein sequence ID" value="BAC43727.1"/>
    <property type="molecule type" value="mRNA"/>
</dbReference>
<dbReference type="EMBL" id="BT006237">
    <property type="protein sequence ID" value="AAP12886.1"/>
    <property type="molecule type" value="mRNA"/>
</dbReference>
<dbReference type="PIR" id="A84811">
    <property type="entry name" value="A84811"/>
</dbReference>
<dbReference type="RefSeq" id="NP_001324931.1">
    <molecule id="Q8GW10-1"/>
    <property type="nucleotide sequence ID" value="NM_001336750.1"/>
</dbReference>
<dbReference type="RefSeq" id="NP_001324932.1">
    <molecule id="Q8GW10-1"/>
    <property type="nucleotide sequence ID" value="NM_001336749.1"/>
</dbReference>
<dbReference type="RefSeq" id="NP_181426.2">
    <molecule id="Q8GW10-1"/>
    <property type="nucleotide sequence ID" value="NM_129450.3"/>
</dbReference>
<dbReference type="SMR" id="Q8GW10"/>
<dbReference type="STRING" id="3702.Q8GW10"/>
<dbReference type="PaxDb" id="3702-AT2G38920.1"/>
<dbReference type="EnsemblPlants" id="AT2G38920.1">
    <molecule id="Q8GW10-1"/>
    <property type="protein sequence ID" value="AT2G38920.1"/>
    <property type="gene ID" value="AT2G38920"/>
</dbReference>
<dbReference type="EnsemblPlants" id="AT2G38920.5">
    <molecule id="Q8GW10-1"/>
    <property type="protein sequence ID" value="AT2G38920.5"/>
    <property type="gene ID" value="AT2G38920"/>
</dbReference>
<dbReference type="EnsemblPlants" id="AT2G38920.6">
    <molecule id="Q8GW10-1"/>
    <property type="protein sequence ID" value="AT2G38920.6"/>
    <property type="gene ID" value="AT2G38920"/>
</dbReference>
<dbReference type="GeneID" id="818477"/>
<dbReference type="Gramene" id="AT2G38920.1">
    <molecule id="Q8GW10-1"/>
    <property type="protein sequence ID" value="AT2G38920.1"/>
    <property type="gene ID" value="AT2G38920"/>
</dbReference>
<dbReference type="Gramene" id="AT2G38920.5">
    <molecule id="Q8GW10-1"/>
    <property type="protein sequence ID" value="AT2G38920.5"/>
    <property type="gene ID" value="AT2G38920"/>
</dbReference>
<dbReference type="Gramene" id="AT2G38920.6">
    <molecule id="Q8GW10-1"/>
    <property type="protein sequence ID" value="AT2G38920.6"/>
    <property type="gene ID" value="AT2G38920"/>
</dbReference>
<dbReference type="KEGG" id="ath:AT2G38920"/>
<dbReference type="Araport" id="AT2G38920"/>
<dbReference type="TAIR" id="AT2G38920"/>
<dbReference type="eggNOG" id="ENOG502QQHB">
    <property type="taxonomic scope" value="Eukaryota"/>
</dbReference>
<dbReference type="InParanoid" id="Q8GW10"/>
<dbReference type="OMA" id="LCQCQSC"/>
<dbReference type="PhylomeDB" id="Q8GW10"/>
<dbReference type="UniPathway" id="UPA00143"/>
<dbReference type="PRO" id="PR:Q8GW10"/>
<dbReference type="Proteomes" id="UP000006548">
    <property type="component" value="Chromosome 2"/>
</dbReference>
<dbReference type="ExpressionAtlas" id="Q8GW10">
    <property type="expression patterns" value="baseline and differential"/>
</dbReference>
<dbReference type="GO" id="GO:0140096">
    <property type="term" value="F:catalytic activity, acting on a protein"/>
    <property type="evidence" value="ECO:0007669"/>
    <property type="project" value="UniProtKB-ARBA"/>
</dbReference>
<dbReference type="GO" id="GO:0016740">
    <property type="term" value="F:transferase activity"/>
    <property type="evidence" value="ECO:0007669"/>
    <property type="project" value="UniProtKB-KW"/>
</dbReference>
<dbReference type="GO" id="GO:0008270">
    <property type="term" value="F:zinc ion binding"/>
    <property type="evidence" value="ECO:0007669"/>
    <property type="project" value="UniProtKB-KW"/>
</dbReference>
<dbReference type="GO" id="GO:0016567">
    <property type="term" value="P:protein ubiquitination"/>
    <property type="evidence" value="ECO:0007669"/>
    <property type="project" value="UniProtKB-UniPathway"/>
</dbReference>
<dbReference type="CDD" id="cd23127">
    <property type="entry name" value="RING-HC_BAH1-like"/>
    <property type="match status" value="1"/>
</dbReference>
<dbReference type="CDD" id="cd14482">
    <property type="entry name" value="SPX_BAH1-like"/>
    <property type="match status" value="1"/>
</dbReference>
<dbReference type="Gene3D" id="3.30.40.10">
    <property type="entry name" value="Zinc/RING finger domain, C3HC4 (zinc finger)"/>
    <property type="match status" value="1"/>
</dbReference>
<dbReference type="InterPro" id="IPR033326">
    <property type="entry name" value="BAH1"/>
</dbReference>
<dbReference type="InterPro" id="IPR004331">
    <property type="entry name" value="SPX_dom"/>
</dbReference>
<dbReference type="InterPro" id="IPR027370">
    <property type="entry name" value="Znf-RING_euk"/>
</dbReference>
<dbReference type="InterPro" id="IPR001841">
    <property type="entry name" value="Znf_RING"/>
</dbReference>
<dbReference type="InterPro" id="IPR013083">
    <property type="entry name" value="Znf_RING/FYVE/PHD"/>
</dbReference>
<dbReference type="InterPro" id="IPR017907">
    <property type="entry name" value="Znf_RING_CS"/>
</dbReference>
<dbReference type="PANTHER" id="PTHR46764">
    <property type="entry name" value="E3 UBIQUITIN-PROTEIN LIGASE BAH1"/>
    <property type="match status" value="1"/>
</dbReference>
<dbReference type="PANTHER" id="PTHR46764:SF2">
    <property type="entry name" value="E3 UBIQUITIN-PROTEIN LIGASE BAH1-LIKE-RELATED"/>
    <property type="match status" value="1"/>
</dbReference>
<dbReference type="Pfam" id="PF13445">
    <property type="entry name" value="zf-RING_UBOX"/>
    <property type="match status" value="1"/>
</dbReference>
<dbReference type="SMART" id="SM00184">
    <property type="entry name" value="RING"/>
    <property type="match status" value="1"/>
</dbReference>
<dbReference type="SUPFAM" id="SSF57850">
    <property type="entry name" value="RING/U-box"/>
    <property type="match status" value="1"/>
</dbReference>
<dbReference type="PROSITE" id="PS51382">
    <property type="entry name" value="SPX"/>
    <property type="match status" value="1"/>
</dbReference>
<dbReference type="PROSITE" id="PS00518">
    <property type="entry name" value="ZF_RING_1"/>
    <property type="match status" value="1"/>
</dbReference>
<dbReference type="PROSITE" id="PS50089">
    <property type="entry name" value="ZF_RING_2"/>
    <property type="match status" value="1"/>
</dbReference>
<accession>Q8GW10</accession>
<accession>Q9ZV14</accession>
<protein>
    <recommendedName>
        <fullName>Probable E3 ubiquitin-protein ligase BAH1-like</fullName>
        <ecNumber evidence="3">2.3.2.27</ecNumber>
    </recommendedName>
    <alternativeName>
        <fullName>RING finger protein 178</fullName>
    </alternativeName>
    <alternativeName>
        <fullName evidence="3">RING-type E3 ubiquitin transferase BAH1-like</fullName>
    </alternativeName>
</protein>
<sequence length="335" mass="38859">MKFGETFTEYLHGEEEWFLEKCRFVEYKKLKKVLKKCKTCNSTKSDDGQIIPSATSSSLSDSCECKACPWCDQMFFEELMKEATDIAGFFRSRVRHLLHLHVATGMQRYMIRLRRCFTDEKQALVQEGQILIQYITMNAIAIRKILKKYDKVHSSENGKNFKLKMRAERIELLHSPWLIELGAFYLNSGLDNVGNFKNSFGRVACENLNEDQPVLKLMLPNSIELEYDLTCAICLETVFNPYALKCGHIFCNSCACSAASVLIFQGIKAAPRHSKCPICREAGVYAEAVHMIELHLLLKTRSKEYWKERMMNERSEMVKQSKMFWNEQTKHMIGY</sequence>
<gene>
    <name type="primary">RF178</name>
    <name type="ordered locus">At2g38920</name>
    <name type="ORF">T7F6.9</name>
</gene>
<keyword id="KW-0025">Alternative splicing</keyword>
<keyword id="KW-0479">Metal-binding</keyword>
<keyword id="KW-1185">Reference proteome</keyword>
<keyword id="KW-0808">Transferase</keyword>
<keyword id="KW-0833">Ubl conjugation pathway</keyword>
<keyword id="KW-0862">Zinc</keyword>
<keyword id="KW-0863">Zinc-finger</keyword>
<evidence type="ECO:0000255" key="1">
    <source>
        <dbReference type="PROSITE-ProRule" id="PRU00175"/>
    </source>
</evidence>
<evidence type="ECO:0000255" key="2">
    <source>
        <dbReference type="PROSITE-ProRule" id="PRU00714"/>
    </source>
</evidence>
<evidence type="ECO:0000305" key="3"/>
<organism>
    <name type="scientific">Arabidopsis thaliana</name>
    <name type="common">Mouse-ear cress</name>
    <dbReference type="NCBI Taxonomy" id="3702"/>
    <lineage>
        <taxon>Eukaryota</taxon>
        <taxon>Viridiplantae</taxon>
        <taxon>Streptophyta</taxon>
        <taxon>Embryophyta</taxon>
        <taxon>Tracheophyta</taxon>
        <taxon>Spermatophyta</taxon>
        <taxon>Magnoliopsida</taxon>
        <taxon>eudicotyledons</taxon>
        <taxon>Gunneridae</taxon>
        <taxon>Pentapetalae</taxon>
        <taxon>rosids</taxon>
        <taxon>malvids</taxon>
        <taxon>Brassicales</taxon>
        <taxon>Brassicaceae</taxon>
        <taxon>Camelineae</taxon>
        <taxon>Arabidopsis</taxon>
    </lineage>
</organism>
<feature type="chain" id="PRO_0000398777" description="Probable E3 ubiquitin-protein ligase BAH1-like">
    <location>
        <begin position="1"/>
        <end position="335"/>
    </location>
</feature>
<feature type="domain" description="SPX" evidence="2">
    <location>
        <begin position="1"/>
        <end position="163"/>
    </location>
</feature>
<feature type="zinc finger region" description="RING-type" evidence="1">
    <location>
        <begin position="231"/>
        <end position="280"/>
    </location>
</feature>
<name>BAH1L_ARATH</name>
<reference key="1">
    <citation type="journal article" date="1999" name="Nature">
        <title>Sequence and analysis of chromosome 2 of the plant Arabidopsis thaliana.</title>
        <authorList>
            <person name="Lin X."/>
            <person name="Kaul S."/>
            <person name="Rounsley S.D."/>
            <person name="Shea T.P."/>
            <person name="Benito M.-I."/>
            <person name="Town C.D."/>
            <person name="Fujii C.Y."/>
            <person name="Mason T.M."/>
            <person name="Bowman C.L."/>
            <person name="Barnstead M.E."/>
            <person name="Feldblyum T.V."/>
            <person name="Buell C.R."/>
            <person name="Ketchum K.A."/>
            <person name="Lee J.J."/>
            <person name="Ronning C.M."/>
            <person name="Koo H.L."/>
            <person name="Moffat K.S."/>
            <person name="Cronin L.A."/>
            <person name="Shen M."/>
            <person name="Pai G."/>
            <person name="Van Aken S."/>
            <person name="Umayam L."/>
            <person name="Tallon L.J."/>
            <person name="Gill J.E."/>
            <person name="Adams M.D."/>
            <person name="Carrera A.J."/>
            <person name="Creasy T.H."/>
            <person name="Goodman H.M."/>
            <person name="Somerville C.R."/>
            <person name="Copenhaver G.P."/>
            <person name="Preuss D."/>
            <person name="Nierman W.C."/>
            <person name="White O."/>
            <person name="Eisen J.A."/>
            <person name="Salzberg S.L."/>
            <person name="Fraser C.M."/>
            <person name="Venter J.C."/>
        </authorList>
    </citation>
    <scope>NUCLEOTIDE SEQUENCE [LARGE SCALE GENOMIC DNA]</scope>
    <source>
        <strain>cv. Columbia</strain>
    </source>
</reference>
<reference key="2">
    <citation type="journal article" date="2017" name="Plant J.">
        <title>Araport11: a complete reannotation of the Arabidopsis thaliana reference genome.</title>
        <authorList>
            <person name="Cheng C.Y."/>
            <person name="Krishnakumar V."/>
            <person name="Chan A.P."/>
            <person name="Thibaud-Nissen F."/>
            <person name="Schobel S."/>
            <person name="Town C.D."/>
        </authorList>
    </citation>
    <scope>GENOME REANNOTATION</scope>
    <source>
        <strain>cv. Columbia</strain>
    </source>
</reference>
<reference key="3">
    <citation type="journal article" date="2002" name="Science">
        <title>Functional annotation of a full-length Arabidopsis cDNA collection.</title>
        <authorList>
            <person name="Seki M."/>
            <person name="Narusaka M."/>
            <person name="Kamiya A."/>
            <person name="Ishida J."/>
            <person name="Satou M."/>
            <person name="Sakurai T."/>
            <person name="Nakajima M."/>
            <person name="Enju A."/>
            <person name="Akiyama K."/>
            <person name="Oono Y."/>
            <person name="Muramatsu M."/>
            <person name="Hayashizaki Y."/>
            <person name="Kawai J."/>
            <person name="Carninci P."/>
            <person name="Itoh M."/>
            <person name="Ishii Y."/>
            <person name="Arakawa T."/>
            <person name="Shibata K."/>
            <person name="Shinagawa A."/>
            <person name="Shinozaki K."/>
        </authorList>
    </citation>
    <scope>NUCLEOTIDE SEQUENCE [LARGE SCALE MRNA]</scope>
    <source>
        <strain>cv. Columbia</strain>
    </source>
</reference>
<reference key="4">
    <citation type="journal article" date="2003" name="Science">
        <title>Empirical analysis of transcriptional activity in the Arabidopsis genome.</title>
        <authorList>
            <person name="Yamada K."/>
            <person name="Lim J."/>
            <person name="Dale J.M."/>
            <person name="Chen H."/>
            <person name="Shinn P."/>
            <person name="Palm C.J."/>
            <person name="Southwick A.M."/>
            <person name="Wu H.C."/>
            <person name="Kim C.J."/>
            <person name="Nguyen M."/>
            <person name="Pham P.K."/>
            <person name="Cheuk R.F."/>
            <person name="Karlin-Newmann G."/>
            <person name="Liu S.X."/>
            <person name="Lam B."/>
            <person name="Sakano H."/>
            <person name="Wu T."/>
            <person name="Yu G."/>
            <person name="Miranda M."/>
            <person name="Quach H.L."/>
            <person name="Tripp M."/>
            <person name="Chang C.H."/>
            <person name="Lee J.M."/>
            <person name="Toriumi M.J."/>
            <person name="Chan M.M."/>
            <person name="Tang C.C."/>
            <person name="Onodera C.S."/>
            <person name="Deng J.M."/>
            <person name="Akiyama K."/>
            <person name="Ansari Y."/>
            <person name="Arakawa T."/>
            <person name="Banh J."/>
            <person name="Banno F."/>
            <person name="Bowser L."/>
            <person name="Brooks S.Y."/>
            <person name="Carninci P."/>
            <person name="Chao Q."/>
            <person name="Choy N."/>
            <person name="Enju A."/>
            <person name="Goldsmith A.D."/>
            <person name="Gurjal M."/>
            <person name="Hansen N.F."/>
            <person name="Hayashizaki Y."/>
            <person name="Johnson-Hopson C."/>
            <person name="Hsuan V.W."/>
            <person name="Iida K."/>
            <person name="Karnes M."/>
            <person name="Khan S."/>
            <person name="Koesema E."/>
            <person name="Ishida J."/>
            <person name="Jiang P.X."/>
            <person name="Jones T."/>
            <person name="Kawai J."/>
            <person name="Kamiya A."/>
            <person name="Meyers C."/>
            <person name="Nakajima M."/>
            <person name="Narusaka M."/>
            <person name="Seki M."/>
            <person name="Sakurai T."/>
            <person name="Satou M."/>
            <person name="Tamse R."/>
            <person name="Vaysberg M."/>
            <person name="Wallender E.K."/>
            <person name="Wong C."/>
            <person name="Yamamura Y."/>
            <person name="Yuan S."/>
            <person name="Shinozaki K."/>
            <person name="Davis R.W."/>
            <person name="Theologis A."/>
            <person name="Ecker J.R."/>
        </authorList>
    </citation>
    <scope>NUCLEOTIDE SEQUENCE [LARGE SCALE MRNA]</scope>
    <source>
        <strain>cv. Columbia</strain>
    </source>
</reference>
<comment type="catalytic activity">
    <reaction evidence="3">
        <text>S-ubiquitinyl-[E2 ubiquitin-conjugating enzyme]-L-cysteine + [acceptor protein]-L-lysine = [E2 ubiquitin-conjugating enzyme]-L-cysteine + N(6)-ubiquitinyl-[acceptor protein]-L-lysine.</text>
        <dbReference type="EC" id="2.3.2.27"/>
    </reaction>
</comment>
<comment type="pathway">
    <text>Protein modification; protein ubiquitination.</text>
</comment>
<comment type="alternative products">
    <event type="alternative splicing"/>
    <isoform>
        <id>Q8GW10-1</id>
        <name>1</name>
        <sequence type="displayed"/>
    </isoform>
    <text>A number of isoforms are produced. According to sequences.</text>
</comment>
<comment type="domain">
    <text>The RING-type zinc finger domain mediates binding to an E2 ubiquitin-conjugating enzyme.</text>
</comment>
<comment type="similarity">
    <text evidence="3">Belongs to the RING-type zinc finger family.</text>
</comment>
<comment type="sequence caution" evidence="3">
    <conflict type="erroneous gene model prediction">
        <sequence resource="EMBL-CDS" id="AAC79605"/>
    </conflict>
</comment>
<proteinExistence type="evidence at transcript level"/>